<proteinExistence type="evidence at protein level"/>
<accession>Q67ZE1</accession>
<accession>O64845</accession>
<evidence type="ECO:0000250" key="1">
    <source>
        <dbReference type="UniProtKB" id="O43050"/>
    </source>
</evidence>
<evidence type="ECO:0000250" key="2">
    <source>
        <dbReference type="UniProtKB" id="Q12068"/>
    </source>
</evidence>
<evidence type="ECO:0000255" key="3"/>
<evidence type="ECO:0000255" key="4">
    <source>
        <dbReference type="PROSITE-ProRule" id="PRU00170"/>
    </source>
</evidence>
<evidence type="ECO:0000255" key="5">
    <source>
        <dbReference type="PROSITE-ProRule" id="PRU00498"/>
    </source>
</evidence>
<evidence type="ECO:0000269" key="6">
    <source>
    </source>
</evidence>
<evidence type="ECO:0000269" key="7">
    <source>
    </source>
</evidence>
<evidence type="ECO:0000303" key="8">
    <source>
    </source>
</evidence>
<evidence type="ECO:0000303" key="9">
    <source>
    </source>
</evidence>
<evidence type="ECO:0000303" key="10">
    <source ref="5"/>
</evidence>
<evidence type="ECO:0000305" key="11"/>
<evidence type="ECO:0000312" key="12">
    <source>
        <dbReference type="Araport" id="AT2G26260"/>
    </source>
</evidence>
<evidence type="ECO:0000312" key="13">
    <source>
        <dbReference type="EMBL" id="AAC14524.1"/>
    </source>
</evidence>
<name>HSDD2_ARATH</name>
<reference key="1">
    <citation type="journal article" date="2006" name="J. Biol. Chem.">
        <title>Molecular and enzymatic characterizations of novel bifunctional 3beta-hydroxysteroid dehydrogenases/C-4 decarboxylases from Arabidopsis thaliana.</title>
        <authorList>
            <person name="Rahier A."/>
            <person name="Darnet S."/>
            <person name="Bouvier F."/>
            <person name="Camara B."/>
            <person name="Bard M."/>
        </authorList>
    </citation>
    <scope>NUCLEOTIDE SEQUENCE [MRNA] (ISOFORM 2)</scope>
    <scope>FUNCTION</scope>
    <scope>CATALYTIC ACTIVITY</scope>
    <scope>PATHWAY</scope>
    <scope>BIOPHYSICOCHEMICAL PROPERTIES</scope>
    <source>
        <strain>cv. Wassilewskija</strain>
    </source>
</reference>
<reference key="2">
    <citation type="journal article" date="1999" name="Nature">
        <title>Sequence and analysis of chromosome 2 of the plant Arabidopsis thaliana.</title>
        <authorList>
            <person name="Lin X."/>
            <person name="Kaul S."/>
            <person name="Rounsley S.D."/>
            <person name="Shea T.P."/>
            <person name="Benito M.-I."/>
            <person name="Town C.D."/>
            <person name="Fujii C.Y."/>
            <person name="Mason T.M."/>
            <person name="Bowman C.L."/>
            <person name="Barnstead M.E."/>
            <person name="Feldblyum T.V."/>
            <person name="Buell C.R."/>
            <person name="Ketchum K.A."/>
            <person name="Lee J.J."/>
            <person name="Ronning C.M."/>
            <person name="Koo H.L."/>
            <person name="Moffat K.S."/>
            <person name="Cronin L.A."/>
            <person name="Shen M."/>
            <person name="Pai G."/>
            <person name="Van Aken S."/>
            <person name="Umayam L."/>
            <person name="Tallon L.J."/>
            <person name="Gill J.E."/>
            <person name="Adams M.D."/>
            <person name="Carrera A.J."/>
            <person name="Creasy T.H."/>
            <person name="Goodman H.M."/>
            <person name="Somerville C.R."/>
            <person name="Copenhaver G.P."/>
            <person name="Preuss D."/>
            <person name="Nierman W.C."/>
            <person name="White O."/>
            <person name="Eisen J.A."/>
            <person name="Salzberg S.L."/>
            <person name="Fraser C.M."/>
            <person name="Venter J.C."/>
        </authorList>
    </citation>
    <scope>NUCLEOTIDE SEQUENCE [LARGE SCALE GENOMIC DNA]</scope>
    <source>
        <strain>cv. Columbia</strain>
    </source>
</reference>
<reference key="3">
    <citation type="journal article" date="2017" name="Plant J.">
        <title>Araport11: a complete reannotation of the Arabidopsis thaliana reference genome.</title>
        <authorList>
            <person name="Cheng C.Y."/>
            <person name="Krishnakumar V."/>
            <person name="Chan A.P."/>
            <person name="Thibaud-Nissen F."/>
            <person name="Schobel S."/>
            <person name="Town C.D."/>
        </authorList>
    </citation>
    <scope>GENOME REANNOTATION</scope>
    <source>
        <strain>cv. Columbia</strain>
    </source>
</reference>
<reference key="4">
    <citation type="journal article" date="2004" name="Genome Res.">
        <title>Whole genome sequence comparisons and 'full-length' cDNA sequences: a combined approach to evaluate and improve Arabidopsis genome annotation.</title>
        <authorList>
            <person name="Castelli V."/>
            <person name="Aury J.-M."/>
            <person name="Jaillon O."/>
            <person name="Wincker P."/>
            <person name="Clepet C."/>
            <person name="Menard M."/>
            <person name="Cruaud C."/>
            <person name="Quetier F."/>
            <person name="Scarpelli C."/>
            <person name="Schaechter V."/>
            <person name="Temple G."/>
            <person name="Caboche M."/>
            <person name="Weissenbach J."/>
            <person name="Salanoubat M."/>
        </authorList>
    </citation>
    <scope>NUCLEOTIDE SEQUENCE [LARGE SCALE MRNA] (ISOFORM 1)</scope>
    <source>
        <strain>cv. Columbia</strain>
    </source>
</reference>
<reference key="5">
    <citation type="submission" date="2004-09" db="EMBL/GenBank/DDBJ databases">
        <title>Large-scale analysis of RIKEN Arabidopsis full-length (RAFL) cDNAs.</title>
        <authorList>
            <person name="Totoki Y."/>
            <person name="Seki M."/>
            <person name="Ishida J."/>
            <person name="Nakajima M."/>
            <person name="Enju A."/>
            <person name="Kamiya A."/>
            <person name="Narusaka M."/>
            <person name="Shin-i T."/>
            <person name="Nakagawa M."/>
            <person name="Sakamoto N."/>
            <person name="Oishi K."/>
            <person name="Kohara Y."/>
            <person name="Kobayashi M."/>
            <person name="Toyoda A."/>
            <person name="Sakaki Y."/>
            <person name="Sakurai T."/>
            <person name="Iida K."/>
            <person name="Akiyama K."/>
            <person name="Satou M."/>
            <person name="Toyoda T."/>
            <person name="Konagaya A."/>
            <person name="Carninci P."/>
            <person name="Kawai J."/>
            <person name="Hayashizaki Y."/>
            <person name="Shinozaki K."/>
        </authorList>
    </citation>
    <scope>NUCLEOTIDE SEQUENCE [LARGE SCALE MRNA] (ISOFORM 3)</scope>
    <source>
        <strain>cv. Columbia</strain>
    </source>
</reference>
<reference key="6">
    <citation type="journal article" date="2007" name="FEBS Lett.">
        <title>Reticulon-like proteins in Arabidopsis thaliana: structural organization and ER localization.</title>
        <authorList>
            <person name="Nziengui H."/>
            <person name="Bouhidel K."/>
            <person name="Pillon D."/>
            <person name="Der C."/>
            <person name="Marty F."/>
            <person name="Schoefs B."/>
        </authorList>
    </citation>
    <scope>GENE FAMILY</scope>
    <scope>NOMENCLATURE</scope>
</reference>
<reference key="7">
    <citation type="journal article" date="2012" name="Mol. Cells">
        <title>Overexpression of 3beta-hydroxysteroid dehydrogenases/C-4 decarboxylases causes growth defects possibly due to abnormal auxin transport in Arabidopsis.</title>
        <authorList>
            <person name="Kim B."/>
            <person name="Kim G."/>
            <person name="Fujioka S."/>
            <person name="Takatsuto S."/>
            <person name="Choe S."/>
        </authorList>
    </citation>
    <scope>FUNCTION</scope>
    <scope>DISRUPTION PHENOTYPE</scope>
    <source>
        <strain>cv. Columbia</strain>
    </source>
</reference>
<protein>
    <recommendedName>
        <fullName evidence="8">3beta-hydroxysteroid-dehydrogenase/decarboxylase isoform 2</fullName>
        <shortName evidence="8">At3BETAHSD/D2</shortName>
        <ecNumber evidence="6">1.1.1.418</ecNumber>
    </recommendedName>
    <alternativeName>
        <fullName>4alpha-carboxysterol-C3-dehydrogenase/C4-decarboxylase isoform 1-2</fullName>
    </alternativeName>
    <alternativeName>
        <fullName evidence="9">Reticulon-like protein B19</fullName>
        <shortName evidence="9">AtRTNLB19</shortName>
    </alternativeName>
    <alternativeName>
        <fullName>Sterol-4-alpha-carboxylate 3-dehydrogenase 2, decarboxylating</fullName>
    </alternativeName>
</protein>
<comment type="function">
    <text evidence="6 7">3beta-hydroxysteroid-dehydrogenase/decarboxylase involved in sterol synthesis (PubMed:16835224). Catalyzes the formation of 3-oxosteroids from 3beta-hydroxysteroids-4alpha-carboxylate (PubMed:16835224). Involved in the regulation of inflorescence internodes and leaves growth, probably by affecting auxin transporter activity possibly by altering sterol composition in the membranes (PubMed:22673766).</text>
</comment>
<comment type="catalytic activity">
    <reaction evidence="6">
        <text>a 3beta-hydroxysteroid-4alpha-carboxylate + NAD(+) = a 3-oxosteroid + CO2 + NADH</text>
        <dbReference type="Rhea" id="RHEA:34775"/>
        <dbReference type="ChEBI" id="CHEBI:16526"/>
        <dbReference type="ChEBI" id="CHEBI:47788"/>
        <dbReference type="ChEBI" id="CHEBI:57540"/>
        <dbReference type="ChEBI" id="CHEBI:57945"/>
        <dbReference type="ChEBI" id="CHEBI:136966"/>
        <dbReference type="EC" id="1.1.1.418"/>
    </reaction>
</comment>
<comment type="catalytic activity">
    <reaction evidence="6">
        <text>4alpha-carboxy-4beta,14alpha-dimethyl-9beta,19-cyclo-5alpha-ergost-24(24(1))-en-3beta-ol + NAD(+) = cycloeucalenone + CO2 + NADH</text>
        <dbReference type="Rhea" id="RHEA:59016"/>
        <dbReference type="ChEBI" id="CHEBI:16526"/>
        <dbReference type="ChEBI" id="CHEBI:57540"/>
        <dbReference type="ChEBI" id="CHEBI:57945"/>
        <dbReference type="ChEBI" id="CHEBI:142915"/>
        <dbReference type="ChEBI" id="CHEBI:142916"/>
        <dbReference type="EC" id="1.1.1.418"/>
    </reaction>
</comment>
<comment type="biophysicochemical properties">
    <kinetics>
        <KM evidence="6">87 uM for 4alpha-carboxy-cholest-7-en-3beta-ol</KM>
        <KM evidence="6">81 uM for 3alpha-deutero-4alpha-carboxy-cholest-7-en-3beta-ol</KM>
        <KM evidence="6">655 uM for 4alpha-carboxy-cholest-7-en-3alpha-ol</KM>
        <KM evidence="6">204 uM for 4alpha-carboxy-4beta-methyl-cholest-8,24-dien-3beta-ol</KM>
        <KM evidence="6">3.1 uM for NAD(+)</KM>
        <Vmax evidence="6">66.0 nmol/h/mg enzyme with 4alpha-carboxy-cholest-7-en-3beta-ol as substrate</Vmax>
        <Vmax evidence="6">60.0 nmol/h/mg enzyme with 3alpha-deutero-4alpha-carboxy-cholest-7-en-3beta-ol as substrate</Vmax>
        <Vmax evidence="6">12.0 nmol/h/mg enzyme with 4alpha-carboxy-cholest-7-en-3alpha-ol as substrate</Vmax>
        <Vmax evidence="6">45.0 nmol/h/mg enzyme with 4alpha-carboxy-4beta-methyl-cholest-8,24-dien-3beta-ol as substrate</Vmax>
    </kinetics>
</comment>
<comment type="pathway">
    <text evidence="6">Steroid biosynthesis; zymosterol biosynthesis; zymosterol from lanosterol: step 4/6.</text>
</comment>
<comment type="subcellular location">
    <subcellularLocation>
        <location evidence="1">Endoplasmic reticulum membrane</location>
        <topology evidence="3">Multi-pass membrane protein</topology>
    </subcellularLocation>
</comment>
<comment type="alternative products">
    <event type="alternative splicing"/>
    <isoform>
        <id>Q67ZE1-1</id>
        <name>1</name>
        <sequence type="displayed"/>
    </isoform>
    <isoform>
        <id>Q67ZE1-2</id>
        <name>2</name>
        <sequence type="described" ref="VSP_037004 VSP_037005"/>
    </isoform>
    <isoform>
        <id>Q67ZE1-3</id>
        <name>3</name>
        <sequence type="described" ref="VSP_037003"/>
    </isoform>
</comment>
<comment type="disruption phenotype">
    <text evidence="7">No noticeable phenotype.</text>
</comment>
<comment type="miscellaneous">
    <molecule>Isoform 2</molecule>
    <text evidence="11">May be due to an intron retention.</text>
</comment>
<comment type="miscellaneous">
    <molecule>Isoform 3</molecule>
    <text evidence="11">May be due to a competing acceptor splice site.</text>
</comment>
<comment type="similarity">
    <text evidence="11">Belongs to the 3-beta-HSD family.</text>
</comment>
<comment type="sequence caution" evidence="11">
    <conflict type="frameshift">
        <sequence resource="EMBL" id="BX818951"/>
    </conflict>
</comment>
<feature type="chain" id="PRO_0000371280" description="3beta-hydroxysteroid-dehydrogenase/decarboxylase isoform 2">
    <location>
        <begin position="1"/>
        <end position="564"/>
    </location>
</feature>
<feature type="transmembrane region" description="Helical" evidence="3">
    <location>
        <begin position="398"/>
        <end position="418"/>
    </location>
</feature>
<feature type="transmembrane region" description="Helical" evidence="3">
    <location>
        <begin position="424"/>
        <end position="444"/>
    </location>
</feature>
<feature type="transmembrane region" description="Helical" evidence="3">
    <location>
        <begin position="486"/>
        <end position="506"/>
    </location>
</feature>
<feature type="transmembrane region" description="Helical" evidence="3">
    <location>
        <begin position="507"/>
        <end position="527"/>
    </location>
</feature>
<feature type="domain" description="Reticulon" evidence="4">
    <location>
        <begin position="384"/>
        <end position="564"/>
    </location>
</feature>
<feature type="active site" description="Proton donor" evidence="2">
    <location>
        <position position="165"/>
    </location>
</feature>
<feature type="binding site" evidence="2">
    <location>
        <begin position="16"/>
        <end position="21"/>
    </location>
    <ligand>
        <name>NAD(+)</name>
        <dbReference type="ChEBI" id="CHEBI:57540"/>
    </ligand>
</feature>
<feature type="binding site" evidence="2">
    <location>
        <position position="161"/>
    </location>
    <ligand>
        <name>NAD(+)</name>
        <dbReference type="ChEBI" id="CHEBI:57540"/>
    </ligand>
</feature>
<feature type="binding site" evidence="2">
    <location>
        <position position="165"/>
    </location>
    <ligand>
        <name>NAD(+)</name>
        <dbReference type="ChEBI" id="CHEBI:57540"/>
    </ligand>
</feature>
<feature type="glycosylation site" description="N-linked (GlcNAc...) asparagine" evidence="5">
    <location>
        <position position="146"/>
    </location>
</feature>
<feature type="glycosylation site" description="N-linked (GlcNAc...) asparagine" evidence="5">
    <location>
        <position position="158"/>
    </location>
</feature>
<feature type="glycosylation site" description="N-linked (GlcNAc...) asparagine" evidence="5">
    <location>
        <position position="474"/>
    </location>
</feature>
<feature type="splice variant" id="VSP_037003" description="In isoform 3." evidence="10">
    <location>
        <begin position="1"/>
        <end position="91"/>
    </location>
</feature>
<feature type="splice variant" id="VSP_037004" description="In isoform 2." evidence="8">
    <original>VADTLLW</original>
    <variation>GMTIYFN</variation>
    <location>
        <begin position="384"/>
        <end position="390"/>
    </location>
</feature>
<feature type="splice variant" id="VSP_037005" description="In isoform 2." evidence="8">
    <location>
        <begin position="391"/>
        <end position="564"/>
    </location>
</feature>
<feature type="sequence conflict" description="In Ref. 4; BX818951." evidence="11" ref="4">
    <original>G</original>
    <variation>E</variation>
    <location>
        <position position="277"/>
    </location>
</feature>
<feature type="sequence conflict" description="In Ref. 4; BX818951." evidence="11" ref="4">
    <original>D</original>
    <variation>N</variation>
    <location>
        <position position="356"/>
    </location>
</feature>
<keyword id="KW-0025">Alternative splicing</keyword>
<keyword id="KW-0256">Endoplasmic reticulum</keyword>
<keyword id="KW-0325">Glycoprotein</keyword>
<keyword id="KW-0444">Lipid biosynthesis</keyword>
<keyword id="KW-0443">Lipid metabolism</keyword>
<keyword id="KW-0472">Membrane</keyword>
<keyword id="KW-0520">NAD</keyword>
<keyword id="KW-0560">Oxidoreductase</keyword>
<keyword id="KW-1185">Reference proteome</keyword>
<keyword id="KW-0752">Steroid biosynthesis</keyword>
<keyword id="KW-0753">Steroid metabolism</keyword>
<keyword id="KW-0756">Sterol biosynthesis</keyword>
<keyword id="KW-1207">Sterol metabolism</keyword>
<keyword id="KW-0812">Transmembrane</keyword>
<keyword id="KW-1133">Transmembrane helix</keyword>
<sequence length="564" mass="61704">MSPAATETERWCVVTGGRGFAARHLVEMLVRYEMFCVRIADLAPAIMLDPQEGNGVLDEGLRSGRVQYISADLRDKSQVVKAFQGAEVVFHMAAPDSSINNHQLQYSVNVQGTQNVIDACVDVGVKRLIYTSSPSVVFDGVHGILNGTESMAYPIKHNDSYSATKAEGEELIMKANGRNGLLTCCIRPSSIFGPGDRLLVPSLVAAARAGKSKFIIGDGNNLYDFTYVENVAHAHVCAERALASGGDVSTKAAGQAYFITNMEPIKFWEFMSQLLDGLGYERPSIKIPAFIMMPIAHLVELTYKVLGPYGMTVPQLTPSRVRLLSCSRTFDSTKAKDRLGYAPVVPLQEGIRRTIDSFSHLTAGSQSKREGPSKASRILGGGKVADTLLWKDLKQTLIAIFILISIYYNFVATGSTVVTALSKALLVASVFLFLHGILPEKIFGYTVEKIPASQFHLSKDSSHDLSLSVISSWNTTVKALRSLCQGNDWSFFFKVVFVLLALSLAGAISLHSIFVIGLPIAFLAFLVYEKKEQEIDSIVVSFKSFACKHKSDVYEKLFGSKKHD</sequence>
<organism>
    <name type="scientific">Arabidopsis thaliana</name>
    <name type="common">Mouse-ear cress</name>
    <dbReference type="NCBI Taxonomy" id="3702"/>
    <lineage>
        <taxon>Eukaryota</taxon>
        <taxon>Viridiplantae</taxon>
        <taxon>Streptophyta</taxon>
        <taxon>Embryophyta</taxon>
        <taxon>Tracheophyta</taxon>
        <taxon>Spermatophyta</taxon>
        <taxon>Magnoliopsida</taxon>
        <taxon>eudicotyledons</taxon>
        <taxon>Gunneridae</taxon>
        <taxon>Pentapetalae</taxon>
        <taxon>rosids</taxon>
        <taxon>malvids</taxon>
        <taxon>Brassicales</taxon>
        <taxon>Brassicaceae</taxon>
        <taxon>Camelineae</taxon>
        <taxon>Arabidopsis</taxon>
    </lineage>
</organism>
<gene>
    <name evidence="8" type="primary">3BETAHSD/D2</name>
    <name evidence="9" type="synonym">RTNLB19</name>
    <name evidence="12" type="ordered locus">At2g26260</name>
    <name evidence="13" type="ORF">T1D16.10</name>
</gene>
<dbReference type="EC" id="1.1.1.418" evidence="6"/>
<dbReference type="EMBL" id="DQ302749">
    <property type="protein sequence ID" value="ABC17877.1"/>
    <property type="molecule type" value="mRNA"/>
</dbReference>
<dbReference type="EMBL" id="AC004484">
    <property type="protein sequence ID" value="AAC14524.1"/>
    <property type="molecule type" value="Genomic_DNA"/>
</dbReference>
<dbReference type="EMBL" id="CP002685">
    <property type="protein sequence ID" value="AEC07814.1"/>
    <property type="molecule type" value="Genomic_DNA"/>
</dbReference>
<dbReference type="EMBL" id="CP002685">
    <property type="protein sequence ID" value="AEC07815.1"/>
    <property type="molecule type" value="Genomic_DNA"/>
</dbReference>
<dbReference type="EMBL" id="BX818951">
    <property type="status" value="NOT_ANNOTATED_CDS"/>
    <property type="molecule type" value="mRNA"/>
</dbReference>
<dbReference type="EMBL" id="AK176177">
    <property type="protein sequence ID" value="BAD43940.1"/>
    <property type="molecule type" value="mRNA"/>
</dbReference>
<dbReference type="PIR" id="C84658">
    <property type="entry name" value="C84658"/>
</dbReference>
<dbReference type="RefSeq" id="NP_001031422.1">
    <molecule id="Q67ZE1-3"/>
    <property type="nucleotide sequence ID" value="NM_001036345.1"/>
</dbReference>
<dbReference type="RefSeq" id="NP_180194.2">
    <molecule id="Q67ZE1-1"/>
    <property type="nucleotide sequence ID" value="NM_128183.4"/>
</dbReference>
<dbReference type="SMR" id="Q67ZE1"/>
<dbReference type="BioGRID" id="2518">
    <property type="interactions" value="2"/>
</dbReference>
<dbReference type="FunCoup" id="Q67ZE1">
    <property type="interactions" value="2136"/>
</dbReference>
<dbReference type="STRING" id="3702.Q67ZE1"/>
<dbReference type="GlyCosmos" id="Q67ZE1">
    <property type="glycosylation" value="3 sites, No reported glycans"/>
</dbReference>
<dbReference type="GlyGen" id="Q67ZE1">
    <property type="glycosylation" value="3 sites"/>
</dbReference>
<dbReference type="PaxDb" id="3702-AT2G26260.1"/>
<dbReference type="ProteomicsDB" id="232130">
    <molecule id="Q67ZE1-1"/>
</dbReference>
<dbReference type="EnsemblPlants" id="AT2G26260.1">
    <molecule id="Q67ZE1-1"/>
    <property type="protein sequence ID" value="AT2G26260.1"/>
    <property type="gene ID" value="AT2G26260"/>
</dbReference>
<dbReference type="EnsemblPlants" id="AT2G26260.2">
    <molecule id="Q67ZE1-3"/>
    <property type="protein sequence ID" value="AT2G26260.2"/>
    <property type="gene ID" value="AT2G26260"/>
</dbReference>
<dbReference type="GeneID" id="817166"/>
<dbReference type="Gramene" id="AT2G26260.1">
    <molecule id="Q67ZE1-1"/>
    <property type="protein sequence ID" value="AT2G26260.1"/>
    <property type="gene ID" value="AT2G26260"/>
</dbReference>
<dbReference type="Gramene" id="AT2G26260.2">
    <molecule id="Q67ZE1-3"/>
    <property type="protein sequence ID" value="AT2G26260.2"/>
    <property type="gene ID" value="AT2G26260"/>
</dbReference>
<dbReference type="KEGG" id="ath:AT2G26260"/>
<dbReference type="Araport" id="AT2G26260"/>
<dbReference type="TAIR" id="AT2G26260">
    <property type="gene designation" value="3BETAHSD/D2"/>
</dbReference>
<dbReference type="eggNOG" id="KOG1430">
    <property type="taxonomic scope" value="Eukaryota"/>
</dbReference>
<dbReference type="InParanoid" id="Q67ZE1"/>
<dbReference type="OMA" id="EAERWCV"/>
<dbReference type="PhylomeDB" id="Q67ZE1"/>
<dbReference type="BioCyc" id="ARA:AT2G26260-MONOMER"/>
<dbReference type="BioCyc" id="MetaCyc:AT2G26260-MONOMER"/>
<dbReference type="BRENDA" id="1.1.1.418">
    <property type="organism ID" value="399"/>
</dbReference>
<dbReference type="UniPathway" id="UPA00770">
    <property type="reaction ID" value="UER00757"/>
</dbReference>
<dbReference type="PRO" id="PR:Q67ZE1"/>
<dbReference type="Proteomes" id="UP000006548">
    <property type="component" value="Chromosome 2"/>
</dbReference>
<dbReference type="ExpressionAtlas" id="Q67ZE1">
    <property type="expression patterns" value="baseline and differential"/>
</dbReference>
<dbReference type="GO" id="GO:0005783">
    <property type="term" value="C:endoplasmic reticulum"/>
    <property type="evidence" value="ECO:0000314"/>
    <property type="project" value="TAIR"/>
</dbReference>
<dbReference type="GO" id="GO:0005789">
    <property type="term" value="C:endoplasmic reticulum membrane"/>
    <property type="evidence" value="ECO:0007669"/>
    <property type="project" value="UniProtKB-SubCell"/>
</dbReference>
<dbReference type="GO" id="GO:0016020">
    <property type="term" value="C:membrane"/>
    <property type="evidence" value="ECO:0000314"/>
    <property type="project" value="TAIR"/>
</dbReference>
<dbReference type="GO" id="GO:0102175">
    <property type="term" value="F:3-beta-hydroxysteroid dehydrogenase (NAD+)/C4-decarboxylase activity"/>
    <property type="evidence" value="ECO:0007669"/>
    <property type="project" value="UniProtKB-EC"/>
</dbReference>
<dbReference type="GO" id="GO:0060918">
    <property type="term" value="P:auxin transport"/>
    <property type="evidence" value="ECO:0000315"/>
    <property type="project" value="UniProtKB"/>
</dbReference>
<dbReference type="GO" id="GO:0099402">
    <property type="term" value="P:plant organ development"/>
    <property type="evidence" value="ECO:0000315"/>
    <property type="project" value="UniProtKB"/>
</dbReference>
<dbReference type="GO" id="GO:0032409">
    <property type="term" value="P:regulation of transporter activity"/>
    <property type="evidence" value="ECO:0000315"/>
    <property type="project" value="UniProtKB"/>
</dbReference>
<dbReference type="GO" id="GO:0016126">
    <property type="term" value="P:sterol biosynthetic process"/>
    <property type="evidence" value="ECO:0007669"/>
    <property type="project" value="UniProtKB-KW"/>
</dbReference>
<dbReference type="CDD" id="cd09813">
    <property type="entry name" value="3b-HSD-NSDHL-like_SDR_e"/>
    <property type="match status" value="1"/>
</dbReference>
<dbReference type="FunFam" id="3.40.50.720:FF:000273">
    <property type="entry name" value="Reticulon-like protein"/>
    <property type="match status" value="1"/>
</dbReference>
<dbReference type="Gene3D" id="3.40.50.720">
    <property type="entry name" value="NAD(P)-binding Rossmann-like Domain"/>
    <property type="match status" value="1"/>
</dbReference>
<dbReference type="InterPro" id="IPR002225">
    <property type="entry name" value="3Beta_OHSteriod_DH/Estase"/>
</dbReference>
<dbReference type="InterPro" id="IPR050177">
    <property type="entry name" value="Lipid_A_modif_metabolic_enz"/>
</dbReference>
<dbReference type="InterPro" id="IPR036291">
    <property type="entry name" value="NAD(P)-bd_dom_sf"/>
</dbReference>
<dbReference type="InterPro" id="IPR003388">
    <property type="entry name" value="Reticulon"/>
</dbReference>
<dbReference type="PANTHER" id="PTHR43245">
    <property type="entry name" value="BIFUNCTIONAL POLYMYXIN RESISTANCE PROTEIN ARNA"/>
    <property type="match status" value="1"/>
</dbReference>
<dbReference type="PANTHER" id="PTHR43245:SF51">
    <property type="entry name" value="SHORT CHAIN DEHYDROGENASE_REDUCTASE FAMILY 42E, MEMBER 2"/>
    <property type="match status" value="1"/>
</dbReference>
<dbReference type="Pfam" id="PF01073">
    <property type="entry name" value="3Beta_HSD"/>
    <property type="match status" value="1"/>
</dbReference>
<dbReference type="Pfam" id="PF02453">
    <property type="entry name" value="Reticulon"/>
    <property type="match status" value="1"/>
</dbReference>
<dbReference type="SUPFAM" id="SSF51735">
    <property type="entry name" value="NAD(P)-binding Rossmann-fold domains"/>
    <property type="match status" value="1"/>
</dbReference>
<dbReference type="PROSITE" id="PS50845">
    <property type="entry name" value="RETICULON"/>
    <property type="match status" value="1"/>
</dbReference>